<organism>
    <name type="scientific">Bombyx mori</name>
    <name type="common">Silk moth</name>
    <dbReference type="NCBI Taxonomy" id="7091"/>
    <lineage>
        <taxon>Eukaryota</taxon>
        <taxon>Metazoa</taxon>
        <taxon>Ecdysozoa</taxon>
        <taxon>Arthropoda</taxon>
        <taxon>Hexapoda</taxon>
        <taxon>Insecta</taxon>
        <taxon>Pterygota</taxon>
        <taxon>Neoptera</taxon>
        <taxon>Endopterygota</taxon>
        <taxon>Lepidoptera</taxon>
        <taxon>Glossata</taxon>
        <taxon>Ditrysia</taxon>
        <taxon>Bombycoidea</taxon>
        <taxon>Bombycidae</taxon>
        <taxon>Bombycinae</taxon>
        <taxon>Bombyx</taxon>
    </lineage>
</organism>
<sequence length="92" mass="10299">MKLLLAIALMLTTVMWASTQQPQTVHTYCGHHLARTLADLCWEAGVDKRSDAQFASYGSAWLMPYSEGRDQRGIVDECCLRPCSVDVLLSYC</sequence>
<protein>
    <recommendedName>
        <fullName>Bombyxin A-5</fullName>
        <shortName>BBX-A5</shortName>
    </recommendedName>
    <alternativeName>
        <fullName>4K-prothoracicotropic hormone</fullName>
        <shortName>4K-PTTH</shortName>
    </alternativeName>
    <component>
        <recommendedName>
            <fullName>Bombyxin A-5 B chain</fullName>
        </recommendedName>
    </component>
    <component>
        <recommendedName>
            <fullName>Bombyxin A-5 A chain</fullName>
        </recommendedName>
    </component>
</protein>
<evidence type="ECO:0000250" key="1"/>
<evidence type="ECO:0000305" key="2"/>
<reference key="1">
    <citation type="journal article" date="1996" name="J. Mol. Biol.">
        <title>Multiple gene copies for bombyxin, an insulin-related peptide of the silkmoth Bombyx mori: structural signs for gene rearrangement and duplication responsible for generation of multiple molecular forms of bombyxin.</title>
        <authorList>
            <person name="Kondo H."/>
            <person name="Ino M."/>
            <person name="Suzuki A."/>
            <person name="Ishizaki H."/>
            <person name="Iwami M."/>
        </authorList>
    </citation>
    <scope>NUCLEOTIDE SEQUENCE [GENOMIC DNA]</scope>
</reference>
<feature type="signal peptide" evidence="1">
    <location>
        <begin position="1"/>
        <end position="19"/>
    </location>
</feature>
<feature type="peptide" id="PRO_0000015974" description="Bombyxin A-5 B chain">
    <location>
        <begin position="20"/>
        <end position="47"/>
    </location>
</feature>
<feature type="propeptide" id="PRO_0000015975" description="C peptide like">
    <location>
        <begin position="50"/>
        <end position="71"/>
    </location>
</feature>
<feature type="peptide" id="PRO_0000015976" description="Bombyxin A-5 A chain">
    <location>
        <begin position="73"/>
        <end position="92"/>
    </location>
</feature>
<feature type="modified residue" description="Pyrrolidone carboxylic acid" evidence="1">
    <location>
        <position position="20"/>
    </location>
</feature>
<feature type="disulfide bond" description="Interchain (between B and A chains)" evidence="1">
    <location>
        <begin position="29"/>
        <end position="79"/>
    </location>
</feature>
<feature type="disulfide bond" description="Interchain (between B and A chains)" evidence="1">
    <location>
        <begin position="41"/>
        <end position="92"/>
    </location>
</feature>
<feature type="disulfide bond" evidence="1">
    <location>
        <begin position="78"/>
        <end position="83"/>
    </location>
</feature>
<comment type="function">
    <text>Brain peptide responsible for activation of prothoracic glands to produce ecdysone in insects.</text>
</comment>
<comment type="subunit">
    <text>Heterodimer of a B chain and an A chain linked by two disulfide bonds.</text>
</comment>
<comment type="subcellular location">
    <subcellularLocation>
        <location>Secreted</location>
    </subcellularLocation>
</comment>
<comment type="miscellaneous">
    <text>Silk worm has two kinds of PTTH: 4K-PTTH and 22K-PTTH; there are many forms of 4K-PTTH.</text>
</comment>
<comment type="similarity">
    <text evidence="2">Belongs to the insulin family.</text>
</comment>
<accession>P26728</accession>
<keyword id="KW-0165">Cleavage on pair of basic residues</keyword>
<keyword id="KW-1015">Disulfide bond</keyword>
<keyword id="KW-0372">Hormone</keyword>
<keyword id="KW-0873">Pyrrolidone carboxylic acid</keyword>
<keyword id="KW-1185">Reference proteome</keyword>
<keyword id="KW-0964">Secreted</keyword>
<keyword id="KW-0732">Signal</keyword>
<gene>
    <name type="primary">BBXA5</name>
</gene>
<proteinExistence type="inferred from homology"/>
<name>BXA5_BOMMO</name>
<dbReference type="EMBL" id="D00770">
    <property type="protein sequence ID" value="BAA00666.1"/>
    <property type="molecule type" value="Genomic_DNA"/>
</dbReference>
<dbReference type="PIR" id="S69479">
    <property type="entry name" value="S69479"/>
</dbReference>
<dbReference type="RefSeq" id="NP_001121608.1">
    <property type="nucleotide sequence ID" value="NM_001128136.1"/>
</dbReference>
<dbReference type="SMR" id="P26728"/>
<dbReference type="FunCoup" id="P26728">
    <property type="interactions" value="162"/>
</dbReference>
<dbReference type="STRING" id="7091.P26728"/>
<dbReference type="EnsemblMetazoa" id="XM_038014051.1">
    <property type="protein sequence ID" value="XP_037869979.1"/>
    <property type="gene ID" value="LOC119629138"/>
</dbReference>
<dbReference type="GeneID" id="100169658"/>
<dbReference type="KEGG" id="bmor:100169658"/>
<dbReference type="CTD" id="100169658"/>
<dbReference type="HOGENOM" id="CLU_125164_2_0_1"/>
<dbReference type="InParanoid" id="P26728"/>
<dbReference type="Proteomes" id="UP000005204">
    <property type="component" value="Unassembled WGS sequence"/>
</dbReference>
<dbReference type="GO" id="GO:0005615">
    <property type="term" value="C:extracellular space"/>
    <property type="evidence" value="ECO:0007669"/>
    <property type="project" value="InterPro"/>
</dbReference>
<dbReference type="GO" id="GO:0008083">
    <property type="term" value="F:growth factor activity"/>
    <property type="evidence" value="ECO:0007669"/>
    <property type="project" value="InterPro"/>
</dbReference>
<dbReference type="GO" id="GO:0005179">
    <property type="term" value="F:hormone activity"/>
    <property type="evidence" value="ECO:0007669"/>
    <property type="project" value="UniProtKB-KW"/>
</dbReference>
<dbReference type="CDD" id="cd04366">
    <property type="entry name" value="IlGF_insulin_bombyxin_like"/>
    <property type="match status" value="1"/>
</dbReference>
<dbReference type="Gene3D" id="1.10.100.10">
    <property type="entry name" value="Insulin-like"/>
    <property type="match status" value="1"/>
</dbReference>
<dbReference type="InterPro" id="IPR017097">
    <property type="entry name" value="Bombyxin"/>
</dbReference>
<dbReference type="InterPro" id="IPR030680">
    <property type="entry name" value="Bombyxin_A"/>
</dbReference>
<dbReference type="InterPro" id="IPR016179">
    <property type="entry name" value="Insulin-like"/>
</dbReference>
<dbReference type="InterPro" id="IPR036438">
    <property type="entry name" value="Insulin-like_sf"/>
</dbReference>
<dbReference type="InterPro" id="IPR022353">
    <property type="entry name" value="Insulin_CS"/>
</dbReference>
<dbReference type="InterPro" id="IPR022352">
    <property type="entry name" value="Insulin_family"/>
</dbReference>
<dbReference type="PANTHER" id="PTHR13647:SF4">
    <property type="entry name" value="INSULIN-LIKE PEPTIDE 1-RELATED"/>
    <property type="match status" value="1"/>
</dbReference>
<dbReference type="PANTHER" id="PTHR13647">
    <property type="entry name" value="INSULIN-LIKE PEPTIDE 2-RELATED"/>
    <property type="match status" value="1"/>
</dbReference>
<dbReference type="Pfam" id="PF00049">
    <property type="entry name" value="Insulin"/>
    <property type="match status" value="1"/>
</dbReference>
<dbReference type="PIRSF" id="PIRSF037038">
    <property type="entry name" value="Bombyxin"/>
    <property type="match status" value="1"/>
</dbReference>
<dbReference type="PIRSF" id="PIRSF500312">
    <property type="entry name" value="Bombyxin_A"/>
    <property type="match status" value="1"/>
</dbReference>
<dbReference type="PRINTS" id="PR02003">
    <property type="entry name" value="BOMBYXIN"/>
</dbReference>
<dbReference type="PRINTS" id="PR00276">
    <property type="entry name" value="INSULINFAMLY"/>
</dbReference>
<dbReference type="SMART" id="SM00078">
    <property type="entry name" value="IlGF"/>
    <property type="match status" value="1"/>
</dbReference>
<dbReference type="SUPFAM" id="SSF56994">
    <property type="entry name" value="Insulin-like"/>
    <property type="match status" value="1"/>
</dbReference>
<dbReference type="PROSITE" id="PS00262">
    <property type="entry name" value="INSULIN"/>
    <property type="match status" value="1"/>
</dbReference>